<reference key="1">
    <citation type="journal article" date="1998" name="FEBS Lett.">
        <title>Stress-responsive expression of genes for two-component response regulator-like proteins in Arabidopsis thaliana.</title>
        <authorList>
            <person name="Urao T."/>
            <person name="Yakubov B."/>
            <person name="Yamaguchi-Shinozaki K."/>
            <person name="Shinozaki K."/>
        </authorList>
    </citation>
    <scope>NUCLEOTIDE SEQUENCE [MRNA]</scope>
    <scope>TISSUE SPECIFICITY</scope>
    <source>
        <strain>cv. Columbia</strain>
    </source>
</reference>
<reference key="2">
    <citation type="journal article" date="1999" name="Nature">
        <title>Sequence and analysis of chromosome 2 of the plant Arabidopsis thaliana.</title>
        <authorList>
            <person name="Lin X."/>
            <person name="Kaul S."/>
            <person name="Rounsley S.D."/>
            <person name="Shea T.P."/>
            <person name="Benito M.-I."/>
            <person name="Town C.D."/>
            <person name="Fujii C.Y."/>
            <person name="Mason T.M."/>
            <person name="Bowman C.L."/>
            <person name="Barnstead M.E."/>
            <person name="Feldblyum T.V."/>
            <person name="Buell C.R."/>
            <person name="Ketchum K.A."/>
            <person name="Lee J.J."/>
            <person name="Ronning C.M."/>
            <person name="Koo H.L."/>
            <person name="Moffat K.S."/>
            <person name="Cronin L.A."/>
            <person name="Shen M."/>
            <person name="Pai G."/>
            <person name="Van Aken S."/>
            <person name="Umayam L."/>
            <person name="Tallon L.J."/>
            <person name="Gill J.E."/>
            <person name="Adams M.D."/>
            <person name="Carrera A.J."/>
            <person name="Creasy T.H."/>
            <person name="Goodman H.M."/>
            <person name="Somerville C.R."/>
            <person name="Copenhaver G.P."/>
            <person name="Preuss D."/>
            <person name="Nierman W.C."/>
            <person name="White O."/>
            <person name="Eisen J.A."/>
            <person name="Salzberg S.L."/>
            <person name="Fraser C.M."/>
            <person name="Venter J.C."/>
        </authorList>
    </citation>
    <scope>NUCLEOTIDE SEQUENCE [LARGE SCALE GENOMIC DNA]</scope>
    <source>
        <strain>cv. Columbia</strain>
    </source>
</reference>
<reference key="3">
    <citation type="journal article" date="2017" name="Plant J.">
        <title>Araport11: a complete reannotation of the Arabidopsis thaliana reference genome.</title>
        <authorList>
            <person name="Cheng C.Y."/>
            <person name="Krishnakumar V."/>
            <person name="Chan A.P."/>
            <person name="Thibaud-Nissen F."/>
            <person name="Schobel S."/>
            <person name="Town C.D."/>
        </authorList>
    </citation>
    <scope>GENOME REANNOTATION</scope>
    <source>
        <strain>cv. Columbia</strain>
    </source>
</reference>
<reference key="4">
    <citation type="journal article" date="2003" name="Science">
        <title>Empirical analysis of transcriptional activity in the Arabidopsis genome.</title>
        <authorList>
            <person name="Yamada K."/>
            <person name="Lim J."/>
            <person name="Dale J.M."/>
            <person name="Chen H."/>
            <person name="Shinn P."/>
            <person name="Palm C.J."/>
            <person name="Southwick A.M."/>
            <person name="Wu H.C."/>
            <person name="Kim C.J."/>
            <person name="Nguyen M."/>
            <person name="Pham P.K."/>
            <person name="Cheuk R.F."/>
            <person name="Karlin-Newmann G."/>
            <person name="Liu S.X."/>
            <person name="Lam B."/>
            <person name="Sakano H."/>
            <person name="Wu T."/>
            <person name="Yu G."/>
            <person name="Miranda M."/>
            <person name="Quach H.L."/>
            <person name="Tripp M."/>
            <person name="Chang C.H."/>
            <person name="Lee J.M."/>
            <person name="Toriumi M.J."/>
            <person name="Chan M.M."/>
            <person name="Tang C.C."/>
            <person name="Onodera C.S."/>
            <person name="Deng J.M."/>
            <person name="Akiyama K."/>
            <person name="Ansari Y."/>
            <person name="Arakawa T."/>
            <person name="Banh J."/>
            <person name="Banno F."/>
            <person name="Bowser L."/>
            <person name="Brooks S.Y."/>
            <person name="Carninci P."/>
            <person name="Chao Q."/>
            <person name="Choy N."/>
            <person name="Enju A."/>
            <person name="Goldsmith A.D."/>
            <person name="Gurjal M."/>
            <person name="Hansen N.F."/>
            <person name="Hayashizaki Y."/>
            <person name="Johnson-Hopson C."/>
            <person name="Hsuan V.W."/>
            <person name="Iida K."/>
            <person name="Karnes M."/>
            <person name="Khan S."/>
            <person name="Koesema E."/>
            <person name="Ishida J."/>
            <person name="Jiang P.X."/>
            <person name="Jones T."/>
            <person name="Kawai J."/>
            <person name="Kamiya A."/>
            <person name="Meyers C."/>
            <person name="Nakajima M."/>
            <person name="Narusaka M."/>
            <person name="Seki M."/>
            <person name="Sakurai T."/>
            <person name="Satou M."/>
            <person name="Tamse R."/>
            <person name="Vaysberg M."/>
            <person name="Wallender E.K."/>
            <person name="Wong C."/>
            <person name="Yamamura Y."/>
            <person name="Yuan S."/>
            <person name="Shinozaki K."/>
            <person name="Davis R.W."/>
            <person name="Theologis A."/>
            <person name="Ecker J.R."/>
        </authorList>
    </citation>
    <scope>NUCLEOTIDE SEQUENCE [LARGE SCALE MRNA]</scope>
    <source>
        <strain>cv. Columbia</strain>
    </source>
</reference>
<reference key="5">
    <citation type="journal article" date="2004" name="Plant Cell">
        <title>Type-A Arabidopsis response regulators are partially redundant negative regulators of cytokinin signaling.</title>
        <authorList>
            <person name="To J.P.C."/>
            <person name="Haberer G."/>
            <person name="Ferreira F.J."/>
            <person name="Deruere J."/>
            <person name="Mason M.G."/>
            <person name="Schaller G.E."/>
            <person name="Alonso J.M."/>
            <person name="Ecker J.R."/>
            <person name="Kieber J.J."/>
        </authorList>
    </citation>
    <scope>FUNCTION</scope>
</reference>
<sequence>MVMETESKFHVLAVDDSLFDRKMIERLLQKSSCQVTTVDSGSKALEFLGLRVDDNDPNALSTSPQIHQEVEINLIITDYCMPGMTGYDLLKKVKESAAFRSIPVVIMSSENVPARISRCLEEGAEEFFLKPVKLADLTKLKPHMMKTKLKKESEKPVAIEEIVVSKPEIEEEEEESSVIEILPLHQEIESEQLEPMLSSNKRKAMEEVVSTDRSRPKYNDITTSV</sequence>
<protein>
    <recommendedName>
        <fullName>Two-component response regulator ARR8</fullName>
    </recommendedName>
    <alternativeName>
        <fullName>Response reactor 3</fullName>
    </alternativeName>
</protein>
<comment type="function">
    <text evidence="2">Functions as a response regulator involved in His-to-Asp phosphorelay signal transduction system. Phosphorylation of the Asp residue in the receiver domain activates the ability of the protein to promote the transcription of target genes. Type-A response regulators seem to act as negative regulators of the cytokinin signaling.</text>
</comment>
<comment type="interaction">
    <interactant intactId="EBI-1100933">
        <id>O80365</id>
    </interactant>
    <interactant intactId="EBI-1100725">
        <id>Q67XQ1</id>
        <label>At1g03430</label>
    </interactant>
    <organismsDiffer>false</organismsDiffer>
    <experiments>3</experiments>
</comment>
<comment type="interaction">
    <interactant intactId="EBI-1100933">
        <id>O80365</id>
    </interactant>
    <interactant intactId="EBI-4426144">
        <id>Q9C9L2</id>
        <label>TCP15</label>
    </interactant>
    <organismsDiffer>false</organismsDiffer>
    <experiments>3</experiments>
</comment>
<comment type="subcellular location">
    <subcellularLocation>
        <location evidence="4">Nucleus</location>
    </subcellularLocation>
</comment>
<comment type="tissue specificity">
    <text evidence="3">Predominantly expressed in roots.</text>
</comment>
<comment type="PTM">
    <text>Two-component system major event consists of a His-to-Asp phosphorelay between a sensor histidine kinase (HK) and a response regulator (RR). In plants, the His-to-Asp phosphorelay involves an additional intermediate named Histidine-containing phosphotransfer protein (HPt). This multistep phosphorelay consists of a His-Asp-His-Asp sequential transfer of a phosphate group between first a His and an Asp of the HK protein, followed by the transfer to a conserved His of the HPt protein and finally the transfer to an Asp in the receiver domain of the RR protein.</text>
</comment>
<comment type="similarity">
    <text evidence="4">Belongs to the ARR family. Type-A subfamily.</text>
</comment>
<gene>
    <name type="primary">ARR8</name>
    <name type="synonym">ATRR3</name>
    <name type="ordered locus">At2g41310</name>
    <name type="ORF">F13H10.14</name>
</gene>
<keyword id="KW-0932">Cytokinin signaling pathway</keyword>
<keyword id="KW-0539">Nucleus</keyword>
<keyword id="KW-0597">Phosphoprotein</keyword>
<keyword id="KW-1185">Reference proteome</keyword>
<keyword id="KW-0804">Transcription</keyword>
<keyword id="KW-0805">Transcription regulation</keyword>
<keyword id="KW-0902">Two-component regulatory system</keyword>
<organism>
    <name type="scientific">Arabidopsis thaliana</name>
    <name type="common">Mouse-ear cress</name>
    <dbReference type="NCBI Taxonomy" id="3702"/>
    <lineage>
        <taxon>Eukaryota</taxon>
        <taxon>Viridiplantae</taxon>
        <taxon>Streptophyta</taxon>
        <taxon>Embryophyta</taxon>
        <taxon>Tracheophyta</taxon>
        <taxon>Spermatophyta</taxon>
        <taxon>Magnoliopsida</taxon>
        <taxon>eudicotyledons</taxon>
        <taxon>Gunneridae</taxon>
        <taxon>Pentapetalae</taxon>
        <taxon>rosids</taxon>
        <taxon>malvids</taxon>
        <taxon>Brassicales</taxon>
        <taxon>Brassicaceae</taxon>
        <taxon>Camelineae</taxon>
        <taxon>Arabidopsis</taxon>
    </lineage>
</organism>
<feature type="chain" id="PRO_0000081429" description="Two-component response regulator ARR8">
    <location>
        <begin position="1"/>
        <end position="225"/>
    </location>
</feature>
<feature type="domain" description="Response regulatory" evidence="1">
    <location>
        <begin position="10"/>
        <end position="145"/>
    </location>
</feature>
<feature type="modified residue" description="4-aspartylphosphate" evidence="1">
    <location>
        <position position="78"/>
    </location>
</feature>
<name>ARR8_ARATH</name>
<proteinExistence type="evidence at protein level"/>
<dbReference type="EMBL" id="AB010917">
    <property type="protein sequence ID" value="BAA31145.1"/>
    <property type="molecule type" value="mRNA"/>
</dbReference>
<dbReference type="EMBL" id="AC005662">
    <property type="protein sequence ID" value="AAC78541.1"/>
    <property type="molecule type" value="Genomic_DNA"/>
</dbReference>
<dbReference type="EMBL" id="CP002685">
    <property type="protein sequence ID" value="AEC09959.1"/>
    <property type="molecule type" value="Genomic_DNA"/>
</dbReference>
<dbReference type="EMBL" id="AY074643">
    <property type="protein sequence ID" value="AAL69459.1"/>
    <property type="molecule type" value="mRNA"/>
</dbReference>
<dbReference type="PIR" id="T48853">
    <property type="entry name" value="T48853"/>
</dbReference>
<dbReference type="RefSeq" id="NP_181663.1">
    <property type="nucleotide sequence ID" value="NM_129695.4"/>
</dbReference>
<dbReference type="SMR" id="O80365"/>
<dbReference type="BioGRID" id="4067">
    <property type="interactions" value="8"/>
</dbReference>
<dbReference type="FunCoup" id="O80365">
    <property type="interactions" value="307"/>
</dbReference>
<dbReference type="IntAct" id="O80365">
    <property type="interactions" value="9"/>
</dbReference>
<dbReference type="STRING" id="3702.O80365"/>
<dbReference type="PaxDb" id="3702-AT2G41310.1"/>
<dbReference type="ProteomicsDB" id="246903"/>
<dbReference type="EnsemblPlants" id="AT2G41310.1">
    <property type="protein sequence ID" value="AT2G41310.1"/>
    <property type="gene ID" value="AT2G41310"/>
</dbReference>
<dbReference type="GeneID" id="818730"/>
<dbReference type="Gramene" id="AT2G41310.1">
    <property type="protein sequence ID" value="AT2G41310.1"/>
    <property type="gene ID" value="AT2G41310"/>
</dbReference>
<dbReference type="KEGG" id="ath:AT2G41310"/>
<dbReference type="Araport" id="AT2G41310"/>
<dbReference type="TAIR" id="AT2G41310">
    <property type="gene designation" value="RR3"/>
</dbReference>
<dbReference type="eggNOG" id="KOG1601">
    <property type="taxonomic scope" value="Eukaryota"/>
</dbReference>
<dbReference type="HOGENOM" id="CLU_000445_69_5_1"/>
<dbReference type="InParanoid" id="O80365"/>
<dbReference type="OMA" id="IANISSX"/>
<dbReference type="OrthoDB" id="60033at2759"/>
<dbReference type="PhylomeDB" id="O80365"/>
<dbReference type="PRO" id="PR:O80365"/>
<dbReference type="Proteomes" id="UP000006548">
    <property type="component" value="Chromosome 2"/>
</dbReference>
<dbReference type="ExpressionAtlas" id="O80365">
    <property type="expression patterns" value="baseline and differential"/>
</dbReference>
<dbReference type="GO" id="GO:0005634">
    <property type="term" value="C:nucleus"/>
    <property type="evidence" value="ECO:0000314"/>
    <property type="project" value="TAIR"/>
</dbReference>
<dbReference type="GO" id="GO:0000156">
    <property type="term" value="F:phosphorelay response regulator activity"/>
    <property type="evidence" value="ECO:0000250"/>
    <property type="project" value="TAIR"/>
</dbReference>
<dbReference type="GO" id="GO:0007623">
    <property type="term" value="P:circadian rhythm"/>
    <property type="evidence" value="ECO:0000315"/>
    <property type="project" value="TAIR"/>
</dbReference>
<dbReference type="GO" id="GO:0009736">
    <property type="term" value="P:cytokinin-activated signaling pathway"/>
    <property type="evidence" value="ECO:0000315"/>
    <property type="project" value="TAIR"/>
</dbReference>
<dbReference type="GO" id="GO:0000160">
    <property type="term" value="P:phosphorelay signal transduction system"/>
    <property type="evidence" value="ECO:0000250"/>
    <property type="project" value="TAIR"/>
</dbReference>
<dbReference type="GO" id="GO:0006355">
    <property type="term" value="P:regulation of DNA-templated transcription"/>
    <property type="evidence" value="ECO:0000304"/>
    <property type="project" value="TAIR"/>
</dbReference>
<dbReference type="CDD" id="cd17581">
    <property type="entry name" value="REC_typeA_ARR"/>
    <property type="match status" value="1"/>
</dbReference>
<dbReference type="FunFam" id="3.40.50.2300:FF:000291">
    <property type="entry name" value="Two-component response regulator ORR4"/>
    <property type="match status" value="1"/>
</dbReference>
<dbReference type="Gene3D" id="3.40.50.2300">
    <property type="match status" value="1"/>
</dbReference>
<dbReference type="InterPro" id="IPR045279">
    <property type="entry name" value="ARR-like"/>
</dbReference>
<dbReference type="InterPro" id="IPR011006">
    <property type="entry name" value="CheY-like_superfamily"/>
</dbReference>
<dbReference type="InterPro" id="IPR001789">
    <property type="entry name" value="Sig_transdc_resp-reg_receiver"/>
</dbReference>
<dbReference type="PANTHER" id="PTHR43874">
    <property type="entry name" value="TWO-COMPONENT RESPONSE REGULATOR"/>
    <property type="match status" value="1"/>
</dbReference>
<dbReference type="PANTHER" id="PTHR43874:SF139">
    <property type="entry name" value="TWO-COMPONENT RESPONSE REGULATOR ARR8"/>
    <property type="match status" value="1"/>
</dbReference>
<dbReference type="Pfam" id="PF00072">
    <property type="entry name" value="Response_reg"/>
    <property type="match status" value="1"/>
</dbReference>
<dbReference type="SMART" id="SM00448">
    <property type="entry name" value="REC"/>
    <property type="match status" value="1"/>
</dbReference>
<dbReference type="SUPFAM" id="SSF52172">
    <property type="entry name" value="CheY-like"/>
    <property type="match status" value="1"/>
</dbReference>
<dbReference type="PROSITE" id="PS50110">
    <property type="entry name" value="RESPONSE_REGULATORY"/>
    <property type="match status" value="1"/>
</dbReference>
<accession>O80365</accession>
<evidence type="ECO:0000255" key="1">
    <source>
        <dbReference type="PROSITE-ProRule" id="PRU00169"/>
    </source>
</evidence>
<evidence type="ECO:0000269" key="2">
    <source>
    </source>
</evidence>
<evidence type="ECO:0000269" key="3">
    <source>
    </source>
</evidence>
<evidence type="ECO:0000305" key="4"/>